<name>TOPZ1_RAT</name>
<sequence>MRPPTTPPVPTTAPGRQGATGGLRKRGLRLTPEPGEGGGCSLEARGREEESRQKRRMVAQASGREETEAKENGKVTEAPSDEPQPGTDLVRKTSITNSESLQTVECSEFQSMAFLQSLAKEELVEGIKRRIQIKKCKSSENPPLKITKNEATQNIMVESQDELFKNTPKYSCNSLSPGVEKNCSFESHDFSFLHSEGCNNKNGFEDEPHGVCLHAEENSLKSKKENLRNLAEKDDTKTTKFLKTEKNVIASKLLLEESHLYQNKNNGLTSCLQSEKNKYSVEENNTGRKHRKKMKLSEKEEKGIDLTLSNVCNNSELVLQEHQIGMEGKETETLEHKKSFLKALRKMNHNTLPPVDHLCLPETVGKTSCRHSTNVVLQKTLESSLKEDTKNASETLGCRRLQPEEYFKSMTSSTVKSPSDSHPMGKRSPRGDLKTDTEESKVSCRRIIPMTGKRVWPLYSCARITAECWKKTSLSDLNDSLPGSLGNVRQHDFLMHQTNQTHLPDSKRLQPSLIERTIESSSKEVYDSELSSLSSVSSVEPTLLDIKETIPHDKKTKLEEPSRNGTEVVSSATEDIQLSNITQILTGNKKKKGNLSKLNLTVAPQESQEANNCANKTVHRKACITKQTLVAPDLVKILNTGRLTNFKIPLLKNKTGKRGEVSARSSEREAYSPLELLDSLSGVEAKQNRNKENICTTSGPQSLNIHSVTPGQTSSHTFYNKNSCTSPSFTKKGYDNKTCNHISETGNTISNKESLSIKIENNTFSCDLGYMEQSSFCSKKQEAFVPISSEISGRKMTKSISELKLGFPDILKAYEDDVLLIDVIQDDPELFGISSEGDLSFASEVSKISQEPRVSEEHPSADFKHRHLPGKKEPGDLSKEVALLDPGLLKLEICPSLSAAKEPQHDPKGAAISLEATEETVISENLEDLSEQARASDSDTKCVSSDKATVVEEQENTHEVCKSKDSRSVEAVSTECHLALGPNTLCSSAPPLTLSSHQDVAPAPWTNDFRFPGRYSVLQLQNPETCEIFKREKNFGVFQKPLGLMIPHRYCKLHFNTLRGCERAQCKFVHVPEQGDEKICMDVFKKYIRVNEQRLLHRAAYIFLEYYRKFPPGIHFSLQVLNDLLISLLKHCLLKEVFQVVQLSIMAKMLPALKILLKIFEYVAAMKLRNAVPALIEIFCKFIEAGMIPDPEHLNYIVKLLHQAQASQQEISAVLEAKSRLQVRQLRKNWTCDLDSALSEVENCKEKGDWTKLGNLYISIKMGCEEFADFQRFCACVAETLTEDYKEERPGVPFCEFAETVSKDPQYSEVDKTLLGRIGISAVYFYHRLLLWSKGRKVLDILYELKIHFTSLKGLTGPEKIAPRCQIVNVAAEIFIKSGSLDGAIWVLRESEWITSTPLWPCDRADVLHRHNLLCAIAHEILGKNLYKQTFEVLRNLPGFQNSQEAMGVSQSSLLFNELLDACIESNSLGISSSVADFMVAKSIPIDFSFLRRLITSLGRSCLWLKARAHYKSALSLGCYPPLEGNVYRKLLLVPSYLSEIEMLLAIEIFLVSNASSIQSPGAPTQVLQIVLKRCEESKPRSKDDYQAAVERLIMAARISDPKLFIKHMTVNINKEQVYSLEHCSAVKWLKENMKWAGKVWLFTNH</sequence>
<protein>
    <recommendedName>
        <fullName evidence="1">Protein TOPAZ1</fullName>
    </recommendedName>
    <alternativeName>
        <fullName evidence="1">Testis- and ovary-specific PAZ domain-containing protein 1</fullName>
    </alternativeName>
</protein>
<accession>D3ZUC6</accession>
<accession>R9PXW9</accession>
<comment type="function">
    <text evidence="1">Important for normal spermatogenesis and male fertility. Specifically required for progression to the post-meiotic stages of spermatocyte development. Seems to be necessary for normal expression levels of a number of testis-expressed gene transcripts, although its role in this process is unclear.</text>
</comment>
<comment type="subcellular location">
    <subcellularLocation>
        <location evidence="1">Cytoplasm</location>
        <location evidence="1">Cytosol</location>
    </subcellularLocation>
</comment>
<dbReference type="EMBL" id="AABR07071813">
    <property type="status" value="NOT_ANNOTATED_CDS"/>
    <property type="molecule type" value="Genomic_DNA"/>
</dbReference>
<dbReference type="RefSeq" id="XP_006244267.1">
    <property type="nucleotide sequence ID" value="XM_006244205.3"/>
</dbReference>
<dbReference type="RefSeq" id="XP_063121377.1">
    <property type="nucleotide sequence ID" value="XM_063265307.1"/>
</dbReference>
<dbReference type="FunCoup" id="D3ZUC6">
    <property type="interactions" value="17"/>
</dbReference>
<dbReference type="STRING" id="10116.ENSRNOP00000032345"/>
<dbReference type="GlyGen" id="D3ZUC6">
    <property type="glycosylation" value="1 site"/>
</dbReference>
<dbReference type="PhosphoSitePlus" id="D3ZUC6"/>
<dbReference type="PaxDb" id="10116-ENSRNOP00000032345"/>
<dbReference type="GeneID" id="301075"/>
<dbReference type="UCSC" id="RGD:1563398">
    <property type="organism name" value="rat"/>
</dbReference>
<dbReference type="AGR" id="RGD:1563398"/>
<dbReference type="RGD" id="1563398">
    <property type="gene designation" value="Topaz1"/>
</dbReference>
<dbReference type="VEuPathDB" id="HostDB:ENSRNOG00000025601"/>
<dbReference type="eggNOG" id="ENOG502QPIV">
    <property type="taxonomic scope" value="Eukaryota"/>
</dbReference>
<dbReference type="HOGENOM" id="CLU_003190_0_0_1"/>
<dbReference type="InParanoid" id="D3ZUC6"/>
<dbReference type="PhylomeDB" id="D3ZUC6"/>
<dbReference type="TreeFam" id="TF338635"/>
<dbReference type="PRO" id="PR:D3ZUC6"/>
<dbReference type="Proteomes" id="UP000002494">
    <property type="component" value="Chromosome 8"/>
</dbReference>
<dbReference type="Bgee" id="ENSRNOG00000025601">
    <property type="expression patterns" value="Expressed in kidney and 3 other cell types or tissues"/>
</dbReference>
<dbReference type="GO" id="GO:0005829">
    <property type="term" value="C:cytosol"/>
    <property type="evidence" value="ECO:0007669"/>
    <property type="project" value="UniProtKB-SubCell"/>
</dbReference>
<dbReference type="GO" id="GO:0006915">
    <property type="term" value="P:apoptotic process"/>
    <property type="evidence" value="ECO:0000266"/>
    <property type="project" value="RGD"/>
</dbReference>
<dbReference type="GO" id="GO:0035234">
    <property type="term" value="P:ectopic germ cell programmed cell death"/>
    <property type="evidence" value="ECO:0000266"/>
    <property type="project" value="RGD"/>
</dbReference>
<dbReference type="GO" id="GO:0140742">
    <property type="term" value="P:lncRNA transcription"/>
    <property type="evidence" value="ECO:0000266"/>
    <property type="project" value="RGD"/>
</dbReference>
<dbReference type="GO" id="GO:0048137">
    <property type="term" value="P:spermatocyte division"/>
    <property type="evidence" value="ECO:0000266"/>
    <property type="project" value="RGD"/>
</dbReference>
<dbReference type="InterPro" id="IPR038952">
    <property type="entry name" value="TOPAZ1"/>
</dbReference>
<dbReference type="InterPro" id="IPR029435">
    <property type="entry name" value="TOPAZ1_dom"/>
</dbReference>
<dbReference type="PANTHER" id="PTHR35671">
    <property type="entry name" value="PROTEIN TOPAZ1"/>
    <property type="match status" value="1"/>
</dbReference>
<dbReference type="PANTHER" id="PTHR35671:SF1">
    <property type="entry name" value="PROTEIN TOPAZ1"/>
    <property type="match status" value="1"/>
</dbReference>
<dbReference type="Pfam" id="PF14669">
    <property type="entry name" value="Asp_Glu_race_2"/>
    <property type="match status" value="1"/>
</dbReference>
<organism>
    <name type="scientific">Rattus norvegicus</name>
    <name type="common">Rat</name>
    <dbReference type="NCBI Taxonomy" id="10116"/>
    <lineage>
        <taxon>Eukaryota</taxon>
        <taxon>Metazoa</taxon>
        <taxon>Chordata</taxon>
        <taxon>Craniata</taxon>
        <taxon>Vertebrata</taxon>
        <taxon>Euteleostomi</taxon>
        <taxon>Mammalia</taxon>
        <taxon>Eutheria</taxon>
        <taxon>Euarchontoglires</taxon>
        <taxon>Glires</taxon>
        <taxon>Rodentia</taxon>
        <taxon>Myomorpha</taxon>
        <taxon>Muroidea</taxon>
        <taxon>Muridae</taxon>
        <taxon>Murinae</taxon>
        <taxon>Rattus</taxon>
    </lineage>
</organism>
<gene>
    <name type="primary">Topaz1</name>
</gene>
<feature type="chain" id="PRO_0000416062" description="Protein TOPAZ1">
    <location>
        <begin position="1"/>
        <end position="1646"/>
    </location>
</feature>
<feature type="region of interest" description="Disordered" evidence="2">
    <location>
        <begin position="1"/>
        <end position="90"/>
    </location>
</feature>
<feature type="region of interest" description="Disordered" evidence="2">
    <location>
        <begin position="407"/>
        <end position="439"/>
    </location>
</feature>
<feature type="region of interest" description="Disordered" evidence="2">
    <location>
        <begin position="850"/>
        <end position="877"/>
    </location>
</feature>
<feature type="compositionally biased region" description="Pro residues" evidence="2">
    <location>
        <begin position="1"/>
        <end position="11"/>
    </location>
</feature>
<feature type="compositionally biased region" description="Basic and acidic residues" evidence="2">
    <location>
        <begin position="63"/>
        <end position="74"/>
    </location>
</feature>
<feature type="compositionally biased region" description="Polar residues" evidence="2">
    <location>
        <begin position="409"/>
        <end position="420"/>
    </location>
</feature>
<feature type="compositionally biased region" description="Basic and acidic residues" evidence="2">
    <location>
        <begin position="429"/>
        <end position="439"/>
    </location>
</feature>
<feature type="compositionally biased region" description="Basic and acidic residues" evidence="2">
    <location>
        <begin position="853"/>
        <end position="863"/>
    </location>
</feature>
<keyword id="KW-0963">Cytoplasm</keyword>
<keyword id="KW-0221">Differentiation</keyword>
<keyword id="KW-1185">Reference proteome</keyword>
<keyword id="KW-0744">Spermatogenesis</keyword>
<reference key="1">
    <citation type="journal article" date="2004" name="Nature">
        <title>Genome sequence of the Brown Norway rat yields insights into mammalian evolution.</title>
        <authorList>
            <person name="Gibbs R.A."/>
            <person name="Weinstock G.M."/>
            <person name="Metzker M.L."/>
            <person name="Muzny D.M."/>
            <person name="Sodergren E.J."/>
            <person name="Scherer S."/>
            <person name="Scott G."/>
            <person name="Steffen D."/>
            <person name="Worley K.C."/>
            <person name="Burch P.E."/>
            <person name="Okwuonu G."/>
            <person name="Hines S."/>
            <person name="Lewis L."/>
            <person name="Deramo C."/>
            <person name="Delgado O."/>
            <person name="Dugan-Rocha S."/>
            <person name="Miner G."/>
            <person name="Morgan M."/>
            <person name="Hawes A."/>
            <person name="Gill R."/>
            <person name="Holt R.A."/>
            <person name="Adams M.D."/>
            <person name="Amanatides P.G."/>
            <person name="Baden-Tillson H."/>
            <person name="Barnstead M."/>
            <person name="Chin S."/>
            <person name="Evans C.A."/>
            <person name="Ferriera S."/>
            <person name="Fosler C."/>
            <person name="Glodek A."/>
            <person name="Gu Z."/>
            <person name="Jennings D."/>
            <person name="Kraft C.L."/>
            <person name="Nguyen T."/>
            <person name="Pfannkoch C.M."/>
            <person name="Sitter C."/>
            <person name="Sutton G.G."/>
            <person name="Venter J.C."/>
            <person name="Woodage T."/>
            <person name="Smith D."/>
            <person name="Lee H.-M."/>
            <person name="Gustafson E."/>
            <person name="Cahill P."/>
            <person name="Kana A."/>
            <person name="Doucette-Stamm L."/>
            <person name="Weinstock K."/>
            <person name="Fechtel K."/>
            <person name="Weiss R.B."/>
            <person name="Dunn D.M."/>
            <person name="Green E.D."/>
            <person name="Blakesley R.W."/>
            <person name="Bouffard G.G."/>
            <person name="De Jong P.J."/>
            <person name="Osoegawa K."/>
            <person name="Zhu B."/>
            <person name="Marra M."/>
            <person name="Schein J."/>
            <person name="Bosdet I."/>
            <person name="Fjell C."/>
            <person name="Jones S."/>
            <person name="Krzywinski M."/>
            <person name="Mathewson C."/>
            <person name="Siddiqui A."/>
            <person name="Wye N."/>
            <person name="McPherson J."/>
            <person name="Zhao S."/>
            <person name="Fraser C.M."/>
            <person name="Shetty J."/>
            <person name="Shatsman S."/>
            <person name="Geer K."/>
            <person name="Chen Y."/>
            <person name="Abramzon S."/>
            <person name="Nierman W.C."/>
            <person name="Havlak P.H."/>
            <person name="Chen R."/>
            <person name="Durbin K.J."/>
            <person name="Egan A."/>
            <person name="Ren Y."/>
            <person name="Song X.-Z."/>
            <person name="Li B."/>
            <person name="Liu Y."/>
            <person name="Qin X."/>
            <person name="Cawley S."/>
            <person name="Cooney A.J."/>
            <person name="D'Souza L.M."/>
            <person name="Martin K."/>
            <person name="Wu J.Q."/>
            <person name="Gonzalez-Garay M.L."/>
            <person name="Jackson A.R."/>
            <person name="Kalafus K.J."/>
            <person name="McLeod M.P."/>
            <person name="Milosavljevic A."/>
            <person name="Virk D."/>
            <person name="Volkov A."/>
            <person name="Wheeler D.A."/>
            <person name="Zhang Z."/>
            <person name="Bailey J.A."/>
            <person name="Eichler E.E."/>
            <person name="Tuzun E."/>
            <person name="Birney E."/>
            <person name="Mongin E."/>
            <person name="Ureta-Vidal A."/>
            <person name="Woodwark C."/>
            <person name="Zdobnov E."/>
            <person name="Bork P."/>
            <person name="Suyama M."/>
            <person name="Torrents D."/>
            <person name="Alexandersson M."/>
            <person name="Trask B.J."/>
            <person name="Young J.M."/>
            <person name="Huang H."/>
            <person name="Wang H."/>
            <person name="Xing H."/>
            <person name="Daniels S."/>
            <person name="Gietzen D."/>
            <person name="Schmidt J."/>
            <person name="Stevens K."/>
            <person name="Vitt U."/>
            <person name="Wingrove J."/>
            <person name="Camara F."/>
            <person name="Mar Alba M."/>
            <person name="Abril J.F."/>
            <person name="Guigo R."/>
            <person name="Smit A."/>
            <person name="Dubchak I."/>
            <person name="Rubin E.M."/>
            <person name="Couronne O."/>
            <person name="Poliakov A."/>
            <person name="Huebner N."/>
            <person name="Ganten D."/>
            <person name="Goesele C."/>
            <person name="Hummel O."/>
            <person name="Kreitler T."/>
            <person name="Lee Y.-A."/>
            <person name="Monti J."/>
            <person name="Schulz H."/>
            <person name="Zimdahl H."/>
            <person name="Himmelbauer H."/>
            <person name="Lehrach H."/>
            <person name="Jacob H.J."/>
            <person name="Bromberg S."/>
            <person name="Gullings-Handley J."/>
            <person name="Jensen-Seaman M.I."/>
            <person name="Kwitek A.E."/>
            <person name="Lazar J."/>
            <person name="Pasko D."/>
            <person name="Tonellato P.J."/>
            <person name="Twigger S."/>
            <person name="Ponting C.P."/>
            <person name="Duarte J.M."/>
            <person name="Rice S."/>
            <person name="Goodstadt L."/>
            <person name="Beatson S.A."/>
            <person name="Emes R.D."/>
            <person name="Winter E.E."/>
            <person name="Webber C."/>
            <person name="Brandt P."/>
            <person name="Nyakatura G."/>
            <person name="Adetobi M."/>
            <person name="Chiaromonte F."/>
            <person name="Elnitski L."/>
            <person name="Eswara P."/>
            <person name="Hardison R.C."/>
            <person name="Hou M."/>
            <person name="Kolbe D."/>
            <person name="Makova K."/>
            <person name="Miller W."/>
            <person name="Nekrutenko A."/>
            <person name="Riemer C."/>
            <person name="Schwartz S."/>
            <person name="Taylor J."/>
            <person name="Yang S."/>
            <person name="Zhang Y."/>
            <person name="Lindpaintner K."/>
            <person name="Andrews T.D."/>
            <person name="Caccamo M."/>
            <person name="Clamp M."/>
            <person name="Clarke L."/>
            <person name="Curwen V."/>
            <person name="Durbin R.M."/>
            <person name="Eyras E."/>
            <person name="Searle S.M."/>
            <person name="Cooper G.M."/>
            <person name="Batzoglou S."/>
            <person name="Brudno M."/>
            <person name="Sidow A."/>
            <person name="Stone E.A."/>
            <person name="Payseur B.A."/>
            <person name="Bourque G."/>
            <person name="Lopez-Otin C."/>
            <person name="Puente X.S."/>
            <person name="Chakrabarti K."/>
            <person name="Chatterji S."/>
            <person name="Dewey C."/>
            <person name="Pachter L."/>
            <person name="Bray N."/>
            <person name="Yap V.B."/>
            <person name="Caspi A."/>
            <person name="Tesler G."/>
            <person name="Pevzner P.A."/>
            <person name="Haussler D."/>
            <person name="Roskin K.M."/>
            <person name="Baertsch R."/>
            <person name="Clawson H."/>
            <person name="Furey T.S."/>
            <person name="Hinrichs A.S."/>
            <person name="Karolchik D."/>
            <person name="Kent W.J."/>
            <person name="Rosenbloom K.R."/>
            <person name="Trumbower H."/>
            <person name="Weirauch M."/>
            <person name="Cooper D.N."/>
            <person name="Stenson P.D."/>
            <person name="Ma B."/>
            <person name="Brent M."/>
            <person name="Arumugam M."/>
            <person name="Shteynberg D."/>
            <person name="Copley R.R."/>
            <person name="Taylor M.S."/>
            <person name="Riethman H."/>
            <person name="Mudunuri U."/>
            <person name="Peterson J."/>
            <person name="Guyer M."/>
            <person name="Felsenfeld A."/>
            <person name="Old S."/>
            <person name="Mockrin S."/>
            <person name="Collins F.S."/>
        </authorList>
    </citation>
    <scope>NUCLEOTIDE SEQUENCE [LARGE SCALE GENOMIC DNA]</scope>
    <source>
        <strain>Brown Norway</strain>
    </source>
</reference>
<evidence type="ECO:0000250" key="1">
    <source>
        <dbReference type="UniProtKB" id="E5FYH1"/>
    </source>
</evidence>
<evidence type="ECO:0000256" key="2">
    <source>
        <dbReference type="SAM" id="MobiDB-lite"/>
    </source>
</evidence>
<proteinExistence type="inferred from homology"/>